<feature type="initiator methionine" description="Removed" evidence="1">
    <location>
        <position position="1"/>
    </location>
</feature>
<feature type="chain" id="PRO_0000209532" description="Probable tautomerase LL0574">
    <location>
        <begin position="2"/>
        <end position="61"/>
    </location>
</feature>
<feature type="active site" description="Proton acceptor; via imino nitrogen" evidence="1">
    <location>
        <position position="2"/>
    </location>
</feature>
<evidence type="ECO:0000250" key="1"/>
<evidence type="ECO:0000305" key="2"/>
<gene>
    <name type="ordered locus">LL0574</name>
    <name type="ORF">L168282</name>
</gene>
<organism>
    <name type="scientific">Lactococcus lactis subsp. lactis (strain IL1403)</name>
    <name type="common">Streptococcus lactis</name>
    <dbReference type="NCBI Taxonomy" id="272623"/>
    <lineage>
        <taxon>Bacteria</taxon>
        <taxon>Bacillati</taxon>
        <taxon>Bacillota</taxon>
        <taxon>Bacilli</taxon>
        <taxon>Lactobacillales</taxon>
        <taxon>Streptococcaceae</taxon>
        <taxon>Lactococcus</taxon>
    </lineage>
</organism>
<comment type="similarity">
    <text evidence="2">Belongs to the 4-oxalocrotonate tautomerase family.</text>
</comment>
<proteinExistence type="inferred from homology"/>
<name>Y574_LACLA</name>
<dbReference type="EC" id="5.3.2.-"/>
<dbReference type="EMBL" id="AE005176">
    <property type="protein sequence ID" value="AAK04672.1"/>
    <property type="molecule type" value="Genomic_DNA"/>
</dbReference>
<dbReference type="PIR" id="F86696">
    <property type="entry name" value="F86696"/>
</dbReference>
<dbReference type="RefSeq" id="NP_266730.1">
    <property type="nucleotide sequence ID" value="NC_002662.1"/>
</dbReference>
<dbReference type="RefSeq" id="WP_003130513.1">
    <property type="nucleotide sequence ID" value="NC_002662.1"/>
</dbReference>
<dbReference type="SMR" id="Q9CHZ4"/>
<dbReference type="PaxDb" id="272623-L168282"/>
<dbReference type="EnsemblBacteria" id="AAK04672">
    <property type="protein sequence ID" value="AAK04672"/>
    <property type="gene ID" value="L168282"/>
</dbReference>
<dbReference type="KEGG" id="lla:L168282"/>
<dbReference type="PATRIC" id="fig|272623.7.peg.614"/>
<dbReference type="eggNOG" id="COG1942">
    <property type="taxonomic scope" value="Bacteria"/>
</dbReference>
<dbReference type="HOGENOM" id="CLU_148073_5_1_9"/>
<dbReference type="OrthoDB" id="5405937at2"/>
<dbReference type="Proteomes" id="UP000002196">
    <property type="component" value="Chromosome"/>
</dbReference>
<dbReference type="GO" id="GO:0016853">
    <property type="term" value="F:isomerase activity"/>
    <property type="evidence" value="ECO:0007669"/>
    <property type="project" value="UniProtKB-KW"/>
</dbReference>
<dbReference type="Gene3D" id="3.30.429.10">
    <property type="entry name" value="Macrophage Migration Inhibitory Factor"/>
    <property type="match status" value="1"/>
</dbReference>
<dbReference type="InterPro" id="IPR004370">
    <property type="entry name" value="4-OT-like_dom"/>
</dbReference>
<dbReference type="InterPro" id="IPR014347">
    <property type="entry name" value="Tautomerase/MIF_sf"/>
</dbReference>
<dbReference type="NCBIfam" id="NF002571">
    <property type="entry name" value="PRK02220.1"/>
    <property type="match status" value="1"/>
</dbReference>
<dbReference type="Pfam" id="PF01361">
    <property type="entry name" value="Tautomerase"/>
    <property type="match status" value="1"/>
</dbReference>
<dbReference type="SUPFAM" id="SSF55331">
    <property type="entry name" value="Tautomerase/MIF"/>
    <property type="match status" value="1"/>
</dbReference>
<keyword id="KW-0413">Isomerase</keyword>
<keyword id="KW-1185">Reference proteome</keyword>
<protein>
    <recommendedName>
        <fullName>Probable tautomerase LL0574</fullName>
        <ecNumber>5.3.2.-</ecNumber>
    </recommendedName>
</protein>
<reference key="1">
    <citation type="journal article" date="2001" name="Genome Res.">
        <title>The complete genome sequence of the lactic acid bacterium Lactococcus lactis ssp. lactis IL1403.</title>
        <authorList>
            <person name="Bolotin A."/>
            <person name="Wincker P."/>
            <person name="Mauger S."/>
            <person name="Jaillon O."/>
            <person name="Malarme K."/>
            <person name="Weissenbach J."/>
            <person name="Ehrlich S.D."/>
            <person name="Sorokin A."/>
        </authorList>
    </citation>
    <scope>NUCLEOTIDE SEQUENCE [LARGE SCALE GENOMIC DNA]</scope>
    <source>
        <strain>IL1403</strain>
    </source>
</reference>
<sequence length="61" mass="6798">MPYVHVELFEGRTVEQKAIIAKEITESISKHAGAPTSAIHVIFNDLPEGMLYQGGEMKKKK</sequence>
<accession>Q9CHZ4</accession>